<comment type="subcellular location">
    <subcellularLocation>
        <location evidence="1">Cell inner membrane</location>
        <topology evidence="1">Multi-pass membrane protein</topology>
    </subcellularLocation>
</comment>
<name>YQJE_SHIFL</name>
<sequence length="134" mass="15147">MADTHHAQGPGKSVLGIGQRIVSIMVEMVETRLRLAVVELEEEKANLFQLLLMLGLTMLFAAFGLMSLMVLIIWAVDPQYRLNAMIATTVVLLLLALIGGIWTLRKSRKSTLLRHTRHELANDRQLLEEESREQ</sequence>
<dbReference type="EMBL" id="AE005674">
    <property type="protein sequence ID" value="AAN44613.1"/>
    <property type="molecule type" value="Genomic_DNA"/>
</dbReference>
<dbReference type="EMBL" id="AE014073">
    <property type="protein sequence ID" value="AAP18427.1"/>
    <property type="molecule type" value="Genomic_DNA"/>
</dbReference>
<dbReference type="RefSeq" id="NP_708906.1">
    <property type="nucleotide sequence ID" value="NC_004337.2"/>
</dbReference>
<dbReference type="RefSeq" id="WP_000785722.1">
    <property type="nucleotide sequence ID" value="NZ_WPGW01000077.1"/>
</dbReference>
<dbReference type="SMR" id="P64587"/>
<dbReference type="STRING" id="198214.SF3142"/>
<dbReference type="PaxDb" id="198214-SF3142"/>
<dbReference type="GeneID" id="1027183"/>
<dbReference type="KEGG" id="sfl:SF3142"/>
<dbReference type="KEGG" id="sfx:S3350"/>
<dbReference type="PATRIC" id="fig|198214.7.peg.3730"/>
<dbReference type="HOGENOM" id="CLU_136851_0_0_6"/>
<dbReference type="Proteomes" id="UP000001006">
    <property type="component" value="Chromosome"/>
</dbReference>
<dbReference type="Proteomes" id="UP000002673">
    <property type="component" value="Chromosome"/>
</dbReference>
<dbReference type="GO" id="GO:0005886">
    <property type="term" value="C:plasma membrane"/>
    <property type="evidence" value="ECO:0007669"/>
    <property type="project" value="UniProtKB-SubCell"/>
</dbReference>
<dbReference type="InterPro" id="IPR009937">
    <property type="entry name" value="Phage_holin_3_6"/>
</dbReference>
<dbReference type="Pfam" id="PF07332">
    <property type="entry name" value="Phage_holin_3_6"/>
    <property type="match status" value="1"/>
</dbReference>
<gene>
    <name type="primary">yqjE</name>
    <name type="ordered locus">SF3142</name>
    <name type="ordered locus">S3350</name>
</gene>
<organism>
    <name type="scientific">Shigella flexneri</name>
    <dbReference type="NCBI Taxonomy" id="623"/>
    <lineage>
        <taxon>Bacteria</taxon>
        <taxon>Pseudomonadati</taxon>
        <taxon>Pseudomonadota</taxon>
        <taxon>Gammaproteobacteria</taxon>
        <taxon>Enterobacterales</taxon>
        <taxon>Enterobacteriaceae</taxon>
        <taxon>Shigella</taxon>
    </lineage>
</organism>
<evidence type="ECO:0000250" key="1"/>
<evidence type="ECO:0000255" key="2"/>
<reference key="1">
    <citation type="journal article" date="2002" name="Nucleic Acids Res.">
        <title>Genome sequence of Shigella flexneri 2a: insights into pathogenicity through comparison with genomes of Escherichia coli K12 and O157.</title>
        <authorList>
            <person name="Jin Q."/>
            <person name="Yuan Z."/>
            <person name="Xu J."/>
            <person name="Wang Y."/>
            <person name="Shen Y."/>
            <person name="Lu W."/>
            <person name="Wang J."/>
            <person name="Liu H."/>
            <person name="Yang J."/>
            <person name="Yang F."/>
            <person name="Zhang X."/>
            <person name="Zhang J."/>
            <person name="Yang G."/>
            <person name="Wu H."/>
            <person name="Qu D."/>
            <person name="Dong J."/>
            <person name="Sun L."/>
            <person name="Xue Y."/>
            <person name="Zhao A."/>
            <person name="Gao Y."/>
            <person name="Zhu J."/>
            <person name="Kan B."/>
            <person name="Ding K."/>
            <person name="Chen S."/>
            <person name="Cheng H."/>
            <person name="Yao Z."/>
            <person name="He B."/>
            <person name="Chen R."/>
            <person name="Ma D."/>
            <person name="Qiang B."/>
            <person name="Wen Y."/>
            <person name="Hou Y."/>
            <person name="Yu J."/>
        </authorList>
    </citation>
    <scope>NUCLEOTIDE SEQUENCE [LARGE SCALE GENOMIC DNA]</scope>
    <source>
        <strain>301 / Serotype 2a</strain>
    </source>
</reference>
<reference key="2">
    <citation type="journal article" date="2003" name="Infect. Immun.">
        <title>Complete genome sequence and comparative genomics of Shigella flexneri serotype 2a strain 2457T.</title>
        <authorList>
            <person name="Wei J."/>
            <person name="Goldberg M.B."/>
            <person name="Burland V."/>
            <person name="Venkatesan M.M."/>
            <person name="Deng W."/>
            <person name="Fournier G."/>
            <person name="Mayhew G.F."/>
            <person name="Plunkett G. III"/>
            <person name="Rose D.J."/>
            <person name="Darling A."/>
            <person name="Mau B."/>
            <person name="Perna N.T."/>
            <person name="Payne S.M."/>
            <person name="Runyen-Janecky L.J."/>
            <person name="Zhou S."/>
            <person name="Schwartz D.C."/>
            <person name="Blattner F.R."/>
        </authorList>
    </citation>
    <scope>NUCLEOTIDE SEQUENCE [LARGE SCALE GENOMIC DNA]</scope>
    <source>
        <strain>ATCC 700930 / 2457T / Serotype 2a</strain>
    </source>
</reference>
<protein>
    <recommendedName>
        <fullName>Inner membrane protein YqjE</fullName>
    </recommendedName>
</protein>
<keyword id="KW-0997">Cell inner membrane</keyword>
<keyword id="KW-1003">Cell membrane</keyword>
<keyword id="KW-0472">Membrane</keyword>
<keyword id="KW-1185">Reference proteome</keyword>
<keyword id="KW-0812">Transmembrane</keyword>
<keyword id="KW-1133">Transmembrane helix</keyword>
<feature type="chain" id="PRO_0000169434" description="Inner membrane protein YqjE">
    <location>
        <begin position="1"/>
        <end position="134"/>
    </location>
</feature>
<feature type="topological domain" description="Cytoplasmic" evidence="2">
    <location>
        <begin position="1"/>
        <end position="55"/>
    </location>
</feature>
<feature type="transmembrane region" description="Helical" evidence="2">
    <location>
        <begin position="56"/>
        <end position="76"/>
    </location>
</feature>
<feature type="topological domain" description="Periplasmic" evidence="2">
    <location>
        <begin position="77"/>
        <end position="83"/>
    </location>
</feature>
<feature type="transmembrane region" description="Helical" evidence="2">
    <location>
        <begin position="84"/>
        <end position="104"/>
    </location>
</feature>
<feature type="topological domain" description="Cytoplasmic" evidence="2">
    <location>
        <begin position="105"/>
        <end position="134"/>
    </location>
</feature>
<proteinExistence type="inferred from homology"/>
<accession>P64587</accession>
<accession>P42618</accession>